<organism>
    <name type="scientific">Bos taurus</name>
    <name type="common">Bovine</name>
    <dbReference type="NCBI Taxonomy" id="9913"/>
    <lineage>
        <taxon>Eukaryota</taxon>
        <taxon>Metazoa</taxon>
        <taxon>Chordata</taxon>
        <taxon>Craniata</taxon>
        <taxon>Vertebrata</taxon>
        <taxon>Euteleostomi</taxon>
        <taxon>Mammalia</taxon>
        <taxon>Eutheria</taxon>
        <taxon>Laurasiatheria</taxon>
        <taxon>Artiodactyla</taxon>
        <taxon>Ruminantia</taxon>
        <taxon>Pecora</taxon>
        <taxon>Bovidae</taxon>
        <taxon>Bovinae</taxon>
        <taxon>Bos</taxon>
    </lineage>
</organism>
<reference key="1">
    <citation type="submission" date="2007-02" db="EMBL/GenBank/DDBJ databases">
        <authorList>
            <consortium name="NIH - Mammalian Gene Collection (MGC) project"/>
        </authorList>
    </citation>
    <scope>NUCLEOTIDE SEQUENCE [LARGE SCALE MRNA]</scope>
    <source>
        <strain>Hereford</strain>
        <tissue>Hippocampus</tissue>
    </source>
</reference>
<sequence>MVKISFQPAVAGIKGDKADKASASASASAPAPTPAAEILLTPAREERPPYQRYKKGGSVGGVCYLSMGMVVLLMGLVFASVYIYRYFFLAQLARDNFFHCGVLYEDSLSSQAHTRMELEEDVKIYLEENYERINVPVPQFGGGDPADIIHDFQRGLTAYHDISLDKCYVIELNTTIVLPPRNFWELLMNVKRGTYLPQTYIIQEEMVVTEHVSDKEALGSFIYHLCSGKDTYRLRRRATRRRINKREAKNCNAIRHFENTFVVETLICGVV</sequence>
<evidence type="ECO:0000250" key="1"/>
<evidence type="ECO:0000250" key="2">
    <source>
        <dbReference type="UniProtKB" id="Q5PQL7"/>
    </source>
</evidence>
<evidence type="ECO:0000255" key="3"/>
<evidence type="ECO:0000255" key="4">
    <source>
        <dbReference type="PROSITE-ProRule" id="PRU00255"/>
    </source>
</evidence>
<evidence type="ECO:0000305" key="5"/>
<dbReference type="EMBL" id="BC133321">
    <property type="protein sequence ID" value="AAI33322.1"/>
    <property type="molecule type" value="mRNA"/>
</dbReference>
<dbReference type="RefSeq" id="NP_001075007.1">
    <property type="nucleotide sequence ID" value="NM_001081538.1"/>
</dbReference>
<dbReference type="SMR" id="A2VDN0"/>
<dbReference type="FunCoup" id="A2VDN0">
    <property type="interactions" value="1880"/>
</dbReference>
<dbReference type="STRING" id="9913.ENSBTAP00000023734"/>
<dbReference type="GlyCosmos" id="A2VDN0">
    <property type="glycosylation" value="1 site, No reported glycans"/>
</dbReference>
<dbReference type="GlyGen" id="A2VDN0">
    <property type="glycosylation" value="1 site"/>
</dbReference>
<dbReference type="PaxDb" id="9913-ENSBTAP00000023734"/>
<dbReference type="Ensembl" id="ENSBTAT00000093242.1">
    <property type="protein sequence ID" value="ENSBTAP00000086113.1"/>
    <property type="gene ID" value="ENSBTAG00000017855.6"/>
</dbReference>
<dbReference type="GeneID" id="539959"/>
<dbReference type="KEGG" id="bta:539959"/>
<dbReference type="CTD" id="81618"/>
<dbReference type="VEuPathDB" id="HostDB:ENSBTAG00000017855"/>
<dbReference type="VGNC" id="VGNC:30341">
    <property type="gene designation" value="ITM2C"/>
</dbReference>
<dbReference type="eggNOG" id="KOG4681">
    <property type="taxonomic scope" value="Eukaryota"/>
</dbReference>
<dbReference type="GeneTree" id="ENSGT00950000183115"/>
<dbReference type="HOGENOM" id="CLU_074596_0_0_1"/>
<dbReference type="InParanoid" id="A2VDN0"/>
<dbReference type="OMA" id="AGNCNHI"/>
<dbReference type="OrthoDB" id="9982095at2759"/>
<dbReference type="TreeFam" id="TF317770"/>
<dbReference type="Proteomes" id="UP000009136">
    <property type="component" value="Chromosome 2"/>
</dbReference>
<dbReference type="Bgee" id="ENSBTAG00000017855">
    <property type="expression patterns" value="Expressed in Ammon's horn and 104 other cell types or tissues"/>
</dbReference>
<dbReference type="GO" id="GO:0005794">
    <property type="term" value="C:Golgi apparatus"/>
    <property type="evidence" value="ECO:0000318"/>
    <property type="project" value="GO_Central"/>
</dbReference>
<dbReference type="GO" id="GO:0005765">
    <property type="term" value="C:lysosomal membrane"/>
    <property type="evidence" value="ECO:0007669"/>
    <property type="project" value="UniProtKB-SubCell"/>
</dbReference>
<dbReference type="GO" id="GO:0005764">
    <property type="term" value="C:lysosome"/>
    <property type="evidence" value="ECO:0000250"/>
    <property type="project" value="UniProtKB"/>
</dbReference>
<dbReference type="GO" id="GO:0005886">
    <property type="term" value="C:plasma membrane"/>
    <property type="evidence" value="ECO:0000250"/>
    <property type="project" value="UniProtKB"/>
</dbReference>
<dbReference type="GO" id="GO:0001540">
    <property type="term" value="F:amyloid-beta binding"/>
    <property type="evidence" value="ECO:0000318"/>
    <property type="project" value="GO_Central"/>
</dbReference>
<dbReference type="GO" id="GO:0042985">
    <property type="term" value="P:negative regulation of amyloid precursor protein biosynthetic process"/>
    <property type="evidence" value="ECO:0000318"/>
    <property type="project" value="GO_Central"/>
</dbReference>
<dbReference type="GO" id="GO:0030182">
    <property type="term" value="P:neuron differentiation"/>
    <property type="evidence" value="ECO:0000250"/>
    <property type="project" value="UniProtKB"/>
</dbReference>
<dbReference type="Gene3D" id="3.30.390.150">
    <property type="match status" value="1"/>
</dbReference>
<dbReference type="InterPro" id="IPR007084">
    <property type="entry name" value="BRICHOS_dom"/>
</dbReference>
<dbReference type="InterPro" id="IPR040145">
    <property type="entry name" value="ITM2"/>
</dbReference>
<dbReference type="PANTHER" id="PTHR10962:SF5">
    <property type="entry name" value="INTEGRAL MEMBRANE PROTEIN 2C"/>
    <property type="match status" value="1"/>
</dbReference>
<dbReference type="PANTHER" id="PTHR10962">
    <property type="entry name" value="INTEGRAL TRANSMEMBRANE PROTEIN 2"/>
    <property type="match status" value="1"/>
</dbReference>
<dbReference type="Pfam" id="PF04089">
    <property type="entry name" value="BRICHOS"/>
    <property type="match status" value="1"/>
</dbReference>
<dbReference type="SMART" id="SM01039">
    <property type="entry name" value="BRICHOS"/>
    <property type="match status" value="1"/>
</dbReference>
<dbReference type="PROSITE" id="PS50869">
    <property type="entry name" value="BRICHOS"/>
    <property type="match status" value="1"/>
</dbReference>
<name>ITM2C_BOVIN</name>
<comment type="function">
    <text evidence="1">Negative regulator of amyloid-beta peptide production. May inhibit the processing of APP by blocking its access to alpha- and beta-secretase. Binding to the beta-secretase-cleaved APP C-terminal fragment is negligible, suggesting that ITM2C is a poor gamma-secretase cleavage inhibitor. May play a role in TNF-induced cell death and neuronal differentiation (By similarity).</text>
</comment>
<comment type="subunit">
    <text evidence="1">Interacts with BACE1. Interacts with APP. Interacts with STMN2 (By similarity).</text>
</comment>
<comment type="subcellular location">
    <subcellularLocation>
        <location evidence="1">Lysosome membrane</location>
        <topology evidence="1">Single-pass type II membrane protein</topology>
    </subcellularLocation>
    <subcellularLocation>
        <location evidence="1">Cell membrane</location>
        <topology evidence="1">Single-pass type II membrane protein</topology>
    </subcellularLocation>
</comment>
<comment type="PTM">
    <text evidence="1">Type I membrane-bound, as well as soluble, furin has a pre-eminent role in ITM2C proteolytic processing. PCSK7 and PCSK5 may also be involved although to a lesser extent. The soluble form of PCSK7 is incapable of processing ITM2C. Fails to undergo shedding by ADAM10 and intramembrane cleavage by SPPL2B (By similarity).</text>
</comment>
<comment type="similarity">
    <text evidence="5">Belongs to the ITM2 family.</text>
</comment>
<feature type="chain" id="PRO_0000295294" description="Integral membrane protein 2C">
    <location>
        <begin position="1"/>
        <end position="271"/>
    </location>
</feature>
<feature type="peptide" id="PRO_0000295295" description="CT-BRI3">
    <location>
        <begin position="247"/>
        <end position="271"/>
    </location>
</feature>
<feature type="transmembrane region" description="Helical; Signal-anchor for type II membrane protein" evidence="3">
    <location>
        <begin position="59"/>
        <end position="79"/>
    </location>
</feature>
<feature type="domain" description="BRICHOS" evidence="4">
    <location>
        <begin position="140"/>
        <end position="234"/>
    </location>
</feature>
<feature type="site" description="Cleavage; by furin" evidence="1">
    <location>
        <begin position="246"/>
        <end position="247"/>
    </location>
</feature>
<feature type="modified residue" description="Phosphothreonine" evidence="2">
    <location>
        <position position="41"/>
    </location>
</feature>
<feature type="glycosylation site" description="N-linked (GlcNAc...) asparagine" evidence="3">
    <location>
        <position position="173"/>
    </location>
</feature>
<feature type="disulfide bond" evidence="1">
    <location>
        <begin position="167"/>
        <end position="226"/>
    </location>
</feature>
<proteinExistence type="evidence at transcript level"/>
<protein>
    <recommendedName>
        <fullName>Integral membrane protein 2C</fullName>
    </recommendedName>
    <component>
        <recommendedName>
            <fullName>CT-BRI3</fullName>
        </recommendedName>
    </component>
</protein>
<gene>
    <name type="primary">ITM2C</name>
</gene>
<keyword id="KW-1003">Cell membrane</keyword>
<keyword id="KW-0165">Cleavage on pair of basic residues</keyword>
<keyword id="KW-1015">Disulfide bond</keyword>
<keyword id="KW-0325">Glycoprotein</keyword>
<keyword id="KW-0458">Lysosome</keyword>
<keyword id="KW-0472">Membrane</keyword>
<keyword id="KW-0597">Phosphoprotein</keyword>
<keyword id="KW-1185">Reference proteome</keyword>
<keyword id="KW-0735">Signal-anchor</keyword>
<keyword id="KW-0812">Transmembrane</keyword>
<keyword id="KW-1133">Transmembrane helix</keyword>
<accession>A2VDN0</accession>